<evidence type="ECO:0000255" key="1">
    <source>
        <dbReference type="HAMAP-Rule" id="MF_00540"/>
    </source>
</evidence>
<comment type="function">
    <text evidence="1">Catalyzes the hydrolytic deamination of adenosine and 2-deoxyadenosine.</text>
</comment>
<comment type="catalytic activity">
    <reaction evidence="1">
        <text>adenosine + H2O + H(+) = inosine + NH4(+)</text>
        <dbReference type="Rhea" id="RHEA:24408"/>
        <dbReference type="ChEBI" id="CHEBI:15377"/>
        <dbReference type="ChEBI" id="CHEBI:15378"/>
        <dbReference type="ChEBI" id="CHEBI:16335"/>
        <dbReference type="ChEBI" id="CHEBI:17596"/>
        <dbReference type="ChEBI" id="CHEBI:28938"/>
        <dbReference type="EC" id="3.5.4.4"/>
    </reaction>
    <physiologicalReaction direction="left-to-right" evidence="1">
        <dbReference type="Rhea" id="RHEA:24409"/>
    </physiologicalReaction>
</comment>
<comment type="catalytic activity">
    <reaction evidence="1">
        <text>2'-deoxyadenosine + H2O + H(+) = 2'-deoxyinosine + NH4(+)</text>
        <dbReference type="Rhea" id="RHEA:28190"/>
        <dbReference type="ChEBI" id="CHEBI:15377"/>
        <dbReference type="ChEBI" id="CHEBI:15378"/>
        <dbReference type="ChEBI" id="CHEBI:17256"/>
        <dbReference type="ChEBI" id="CHEBI:28938"/>
        <dbReference type="ChEBI" id="CHEBI:28997"/>
        <dbReference type="EC" id="3.5.4.4"/>
    </reaction>
    <physiologicalReaction direction="left-to-right" evidence="1">
        <dbReference type="Rhea" id="RHEA:28191"/>
    </physiologicalReaction>
</comment>
<comment type="cofactor">
    <cofactor evidence="1">
        <name>Zn(2+)</name>
        <dbReference type="ChEBI" id="CHEBI:29105"/>
    </cofactor>
    <text evidence="1">Binds 1 zinc ion per subunit.</text>
</comment>
<comment type="similarity">
    <text evidence="1">Belongs to the metallo-dependent hydrolases superfamily. Adenosine and AMP deaminases family. Adenosine deaminase subfamily.</text>
</comment>
<feature type="chain" id="PRO_1000017707" description="Adenosine deaminase">
    <location>
        <begin position="1"/>
        <end position="333"/>
    </location>
</feature>
<feature type="active site" description="Proton donor" evidence="1">
    <location>
        <position position="200"/>
    </location>
</feature>
<feature type="binding site" evidence="1">
    <location>
        <position position="12"/>
    </location>
    <ligand>
        <name>Zn(2+)</name>
        <dbReference type="ChEBI" id="CHEBI:29105"/>
        <note>catalytic</note>
    </ligand>
</feature>
<feature type="binding site" evidence="1">
    <location>
        <position position="14"/>
    </location>
    <ligand>
        <name>substrate</name>
    </ligand>
</feature>
<feature type="binding site" evidence="1">
    <location>
        <position position="14"/>
    </location>
    <ligand>
        <name>Zn(2+)</name>
        <dbReference type="ChEBI" id="CHEBI:29105"/>
        <note>catalytic</note>
    </ligand>
</feature>
<feature type="binding site" evidence="1">
    <location>
        <position position="16"/>
    </location>
    <ligand>
        <name>substrate</name>
    </ligand>
</feature>
<feature type="binding site" evidence="1">
    <location>
        <position position="170"/>
    </location>
    <ligand>
        <name>substrate</name>
    </ligand>
</feature>
<feature type="binding site" evidence="1">
    <location>
        <position position="197"/>
    </location>
    <ligand>
        <name>Zn(2+)</name>
        <dbReference type="ChEBI" id="CHEBI:29105"/>
        <note>catalytic</note>
    </ligand>
</feature>
<feature type="binding site" evidence="1">
    <location>
        <position position="278"/>
    </location>
    <ligand>
        <name>Zn(2+)</name>
        <dbReference type="ChEBI" id="CHEBI:29105"/>
        <note>catalytic</note>
    </ligand>
</feature>
<feature type="binding site" evidence="1">
    <location>
        <position position="279"/>
    </location>
    <ligand>
        <name>substrate</name>
    </ligand>
</feature>
<feature type="site" description="Important for catalytic activity" evidence="1">
    <location>
        <position position="221"/>
    </location>
</feature>
<gene>
    <name evidence="1" type="primary">add</name>
    <name type="ordered locus">SSON_1535</name>
</gene>
<protein>
    <recommendedName>
        <fullName evidence="1">Adenosine deaminase</fullName>
        <ecNumber evidence="1">3.5.4.4</ecNumber>
    </recommendedName>
    <alternativeName>
        <fullName evidence="1">Adenosine aminohydrolase</fullName>
    </alternativeName>
</protein>
<accession>Q3Z1X8</accession>
<proteinExistence type="inferred from homology"/>
<sequence length="333" mass="36374">MIDTTLPLTDIHRHLDGNIRPQTILELGRQYNISLPAQSLETLIPHVQVIANEPDLVSFLTKLDWGVKVLASLDACRRVAFENIEDAARNGLHYVELRFSPGYMAMAHQLPVAGVVEAVIDGVREGCRTFGVQAKLIGIMSRTFGEAACQQELEAFLAHRDQITALDLAGDELGFPGSLFLSHFNRARDAGWHITVHAGEAAGPESIWQAIRELGAERIGHGVKAIEDRALMDFLAEQQIGIESCLTSNIQTSTVAELAAHPLKTFLEHGIRASINTDDPGVQGVDIIHEYTVAAPAAGLSREQIRQAQINGLEMAFLSAEEKRALREKVAAK</sequence>
<reference key="1">
    <citation type="journal article" date="2005" name="Nucleic Acids Res.">
        <title>Genome dynamics and diversity of Shigella species, the etiologic agents of bacillary dysentery.</title>
        <authorList>
            <person name="Yang F."/>
            <person name="Yang J."/>
            <person name="Zhang X."/>
            <person name="Chen L."/>
            <person name="Jiang Y."/>
            <person name="Yan Y."/>
            <person name="Tang X."/>
            <person name="Wang J."/>
            <person name="Xiong Z."/>
            <person name="Dong J."/>
            <person name="Xue Y."/>
            <person name="Zhu Y."/>
            <person name="Xu X."/>
            <person name="Sun L."/>
            <person name="Chen S."/>
            <person name="Nie H."/>
            <person name="Peng J."/>
            <person name="Xu J."/>
            <person name="Wang Y."/>
            <person name="Yuan Z."/>
            <person name="Wen Y."/>
            <person name="Yao Z."/>
            <person name="Shen Y."/>
            <person name="Qiang B."/>
            <person name="Hou Y."/>
            <person name="Yu J."/>
            <person name="Jin Q."/>
        </authorList>
    </citation>
    <scope>NUCLEOTIDE SEQUENCE [LARGE SCALE GENOMIC DNA]</scope>
    <source>
        <strain>Ss046</strain>
    </source>
</reference>
<name>ADD_SHISS</name>
<dbReference type="EC" id="3.5.4.4" evidence="1"/>
<dbReference type="EMBL" id="CP000038">
    <property type="protein sequence ID" value="AAZ88234.1"/>
    <property type="molecule type" value="Genomic_DNA"/>
</dbReference>
<dbReference type="RefSeq" id="WP_000567513.1">
    <property type="nucleotide sequence ID" value="NC_007384.1"/>
</dbReference>
<dbReference type="SMR" id="Q3Z1X8"/>
<dbReference type="GeneID" id="93775774"/>
<dbReference type="KEGG" id="ssn:SSON_1535"/>
<dbReference type="HOGENOM" id="CLU_039228_0_2_6"/>
<dbReference type="Proteomes" id="UP000002529">
    <property type="component" value="Chromosome"/>
</dbReference>
<dbReference type="GO" id="GO:0005829">
    <property type="term" value="C:cytosol"/>
    <property type="evidence" value="ECO:0007669"/>
    <property type="project" value="TreeGrafter"/>
</dbReference>
<dbReference type="GO" id="GO:0046936">
    <property type="term" value="F:2'-deoxyadenosine deaminase activity"/>
    <property type="evidence" value="ECO:0007669"/>
    <property type="project" value="RHEA"/>
</dbReference>
<dbReference type="GO" id="GO:0004000">
    <property type="term" value="F:adenosine deaminase activity"/>
    <property type="evidence" value="ECO:0007669"/>
    <property type="project" value="UniProtKB-UniRule"/>
</dbReference>
<dbReference type="GO" id="GO:0008270">
    <property type="term" value="F:zinc ion binding"/>
    <property type="evidence" value="ECO:0007669"/>
    <property type="project" value="UniProtKB-UniRule"/>
</dbReference>
<dbReference type="GO" id="GO:0006154">
    <property type="term" value="P:adenosine catabolic process"/>
    <property type="evidence" value="ECO:0007669"/>
    <property type="project" value="TreeGrafter"/>
</dbReference>
<dbReference type="GO" id="GO:0043103">
    <property type="term" value="P:hypoxanthine salvage"/>
    <property type="evidence" value="ECO:0007669"/>
    <property type="project" value="TreeGrafter"/>
</dbReference>
<dbReference type="GO" id="GO:0046103">
    <property type="term" value="P:inosine biosynthetic process"/>
    <property type="evidence" value="ECO:0007669"/>
    <property type="project" value="TreeGrafter"/>
</dbReference>
<dbReference type="GO" id="GO:0009117">
    <property type="term" value="P:nucleotide metabolic process"/>
    <property type="evidence" value="ECO:0007669"/>
    <property type="project" value="UniProtKB-KW"/>
</dbReference>
<dbReference type="GO" id="GO:0009168">
    <property type="term" value="P:purine ribonucleoside monophosphate biosynthetic process"/>
    <property type="evidence" value="ECO:0007669"/>
    <property type="project" value="UniProtKB-UniRule"/>
</dbReference>
<dbReference type="CDD" id="cd01320">
    <property type="entry name" value="ADA"/>
    <property type="match status" value="1"/>
</dbReference>
<dbReference type="FunFam" id="3.20.20.140:FF:000009">
    <property type="entry name" value="Adenosine deaminase"/>
    <property type="match status" value="1"/>
</dbReference>
<dbReference type="Gene3D" id="3.20.20.140">
    <property type="entry name" value="Metal-dependent hydrolases"/>
    <property type="match status" value="1"/>
</dbReference>
<dbReference type="HAMAP" id="MF_00540">
    <property type="entry name" value="A_deaminase"/>
    <property type="match status" value="1"/>
</dbReference>
<dbReference type="InterPro" id="IPR006650">
    <property type="entry name" value="A/AMP_deam_AS"/>
</dbReference>
<dbReference type="InterPro" id="IPR028893">
    <property type="entry name" value="A_deaminase"/>
</dbReference>
<dbReference type="InterPro" id="IPR001365">
    <property type="entry name" value="A_deaminase_dom"/>
</dbReference>
<dbReference type="InterPro" id="IPR006330">
    <property type="entry name" value="Ado/ade_deaminase"/>
</dbReference>
<dbReference type="InterPro" id="IPR032466">
    <property type="entry name" value="Metal_Hydrolase"/>
</dbReference>
<dbReference type="NCBIfam" id="TIGR01430">
    <property type="entry name" value="aden_deam"/>
    <property type="match status" value="1"/>
</dbReference>
<dbReference type="NCBIfam" id="NF006846">
    <property type="entry name" value="PRK09358.1-1"/>
    <property type="match status" value="1"/>
</dbReference>
<dbReference type="PANTHER" id="PTHR11409">
    <property type="entry name" value="ADENOSINE DEAMINASE"/>
    <property type="match status" value="1"/>
</dbReference>
<dbReference type="PANTHER" id="PTHR11409:SF43">
    <property type="entry name" value="ADENOSINE DEAMINASE"/>
    <property type="match status" value="1"/>
</dbReference>
<dbReference type="Pfam" id="PF00962">
    <property type="entry name" value="A_deaminase"/>
    <property type="match status" value="1"/>
</dbReference>
<dbReference type="SUPFAM" id="SSF51556">
    <property type="entry name" value="Metallo-dependent hydrolases"/>
    <property type="match status" value="1"/>
</dbReference>
<dbReference type="PROSITE" id="PS00485">
    <property type="entry name" value="A_DEAMINASE"/>
    <property type="match status" value="1"/>
</dbReference>
<keyword id="KW-0378">Hydrolase</keyword>
<keyword id="KW-0479">Metal-binding</keyword>
<keyword id="KW-0546">Nucleotide metabolism</keyword>
<keyword id="KW-1185">Reference proteome</keyword>
<keyword id="KW-0862">Zinc</keyword>
<organism>
    <name type="scientific">Shigella sonnei (strain Ss046)</name>
    <dbReference type="NCBI Taxonomy" id="300269"/>
    <lineage>
        <taxon>Bacteria</taxon>
        <taxon>Pseudomonadati</taxon>
        <taxon>Pseudomonadota</taxon>
        <taxon>Gammaproteobacteria</taxon>
        <taxon>Enterobacterales</taxon>
        <taxon>Enterobacteriaceae</taxon>
        <taxon>Shigella</taxon>
    </lineage>
</organism>